<evidence type="ECO:0000255" key="1">
    <source>
        <dbReference type="HAMAP-Rule" id="MF_00514"/>
    </source>
</evidence>
<evidence type="ECO:0000305" key="2"/>
<protein>
    <recommendedName>
        <fullName evidence="1">Large ribosomal subunit protein bL35</fullName>
    </recommendedName>
    <alternativeName>
        <fullName evidence="2">50S ribosomal protein L35</fullName>
    </alternativeName>
</protein>
<dbReference type="EMBL" id="CP000733">
    <property type="protein sequence ID" value="ABS77116.1"/>
    <property type="molecule type" value="Genomic_DNA"/>
</dbReference>
<dbReference type="RefSeq" id="WP_005770936.1">
    <property type="nucleotide sequence ID" value="NC_009727.1"/>
</dbReference>
<dbReference type="SMR" id="A9KGB9"/>
<dbReference type="KEGG" id="cbd:CBUD_1413"/>
<dbReference type="HOGENOM" id="CLU_169643_1_1_6"/>
<dbReference type="Proteomes" id="UP000008555">
    <property type="component" value="Chromosome"/>
</dbReference>
<dbReference type="GO" id="GO:0022625">
    <property type="term" value="C:cytosolic large ribosomal subunit"/>
    <property type="evidence" value="ECO:0007669"/>
    <property type="project" value="TreeGrafter"/>
</dbReference>
<dbReference type="GO" id="GO:0003735">
    <property type="term" value="F:structural constituent of ribosome"/>
    <property type="evidence" value="ECO:0007669"/>
    <property type="project" value="InterPro"/>
</dbReference>
<dbReference type="GO" id="GO:0006412">
    <property type="term" value="P:translation"/>
    <property type="evidence" value="ECO:0007669"/>
    <property type="project" value="UniProtKB-UniRule"/>
</dbReference>
<dbReference type="FunFam" id="4.10.410.60:FF:000001">
    <property type="entry name" value="50S ribosomal protein L35"/>
    <property type="match status" value="1"/>
</dbReference>
<dbReference type="Gene3D" id="4.10.410.60">
    <property type="match status" value="1"/>
</dbReference>
<dbReference type="HAMAP" id="MF_00514">
    <property type="entry name" value="Ribosomal_bL35"/>
    <property type="match status" value="1"/>
</dbReference>
<dbReference type="InterPro" id="IPR001706">
    <property type="entry name" value="Ribosomal_bL35"/>
</dbReference>
<dbReference type="InterPro" id="IPR021137">
    <property type="entry name" value="Ribosomal_bL35-like"/>
</dbReference>
<dbReference type="InterPro" id="IPR018265">
    <property type="entry name" value="Ribosomal_bL35_CS"/>
</dbReference>
<dbReference type="InterPro" id="IPR037229">
    <property type="entry name" value="Ribosomal_bL35_sf"/>
</dbReference>
<dbReference type="NCBIfam" id="TIGR00001">
    <property type="entry name" value="rpmI_bact"/>
    <property type="match status" value="1"/>
</dbReference>
<dbReference type="PANTHER" id="PTHR33343">
    <property type="entry name" value="54S RIBOSOMAL PROTEIN BL35M"/>
    <property type="match status" value="1"/>
</dbReference>
<dbReference type="PANTHER" id="PTHR33343:SF1">
    <property type="entry name" value="LARGE RIBOSOMAL SUBUNIT PROTEIN BL35M"/>
    <property type="match status" value="1"/>
</dbReference>
<dbReference type="Pfam" id="PF01632">
    <property type="entry name" value="Ribosomal_L35p"/>
    <property type="match status" value="1"/>
</dbReference>
<dbReference type="PRINTS" id="PR00064">
    <property type="entry name" value="RIBOSOMALL35"/>
</dbReference>
<dbReference type="SUPFAM" id="SSF143034">
    <property type="entry name" value="L35p-like"/>
    <property type="match status" value="1"/>
</dbReference>
<dbReference type="PROSITE" id="PS00936">
    <property type="entry name" value="RIBOSOMAL_L35"/>
    <property type="match status" value="1"/>
</dbReference>
<organism>
    <name type="scientific">Coxiella burnetii (strain Dugway 5J108-111)</name>
    <dbReference type="NCBI Taxonomy" id="434922"/>
    <lineage>
        <taxon>Bacteria</taxon>
        <taxon>Pseudomonadati</taxon>
        <taxon>Pseudomonadota</taxon>
        <taxon>Gammaproteobacteria</taxon>
        <taxon>Legionellales</taxon>
        <taxon>Coxiellaceae</taxon>
        <taxon>Coxiella</taxon>
    </lineage>
</organism>
<proteinExistence type="inferred from homology"/>
<comment type="similarity">
    <text evidence="1">Belongs to the bacterial ribosomal protein bL35 family.</text>
</comment>
<accession>A9KGB9</accession>
<feature type="chain" id="PRO_1000081604" description="Large ribosomal subunit protein bL35">
    <location>
        <begin position="1"/>
        <end position="64"/>
    </location>
</feature>
<reference key="1">
    <citation type="journal article" date="2009" name="Infect. Immun.">
        <title>Comparative genomics reveal extensive transposon-mediated genomic plasticity and diversity among potential effector proteins within the genus Coxiella.</title>
        <authorList>
            <person name="Beare P.A."/>
            <person name="Unsworth N."/>
            <person name="Andoh M."/>
            <person name="Voth D.E."/>
            <person name="Omsland A."/>
            <person name="Gilk S.D."/>
            <person name="Williams K.P."/>
            <person name="Sobral B.W."/>
            <person name="Kupko J.J. III"/>
            <person name="Porcella S.F."/>
            <person name="Samuel J.E."/>
            <person name="Heinzen R.A."/>
        </authorList>
    </citation>
    <scope>NUCLEOTIDE SEQUENCE [LARGE SCALE GENOMIC DNA]</scope>
    <source>
        <strain>Dugway 5J108-111</strain>
    </source>
</reference>
<gene>
    <name evidence="1" type="primary">rpmI</name>
    <name type="ordered locus">CBUD_1413</name>
</gene>
<sequence length="64" mass="7393">MPKLKTNRGAVKRFKVTGSGKIKRAASNHNHILTKKSQKRKRRLRKIHEVAPSDMRAVSEMLRD</sequence>
<keyword id="KW-0687">Ribonucleoprotein</keyword>
<keyword id="KW-0689">Ribosomal protein</keyword>
<name>RL35_COXBN</name>